<proteinExistence type="evidence at transcript level"/>
<feature type="signal peptide" evidence="2">
    <location>
        <begin position="1"/>
        <end position="21"/>
    </location>
</feature>
<feature type="chain" id="PRO_0000021607" description="Leucine-rich repeat-containing protein 15">
    <location>
        <begin position="22"/>
        <end position="578"/>
    </location>
</feature>
<feature type="topological domain" description="Extracellular" evidence="2">
    <location>
        <begin position="22"/>
        <end position="535"/>
    </location>
</feature>
<feature type="transmembrane region" description="Helical" evidence="2">
    <location>
        <begin position="536"/>
        <end position="556"/>
    </location>
</feature>
<feature type="topological domain" description="Cytoplasmic" evidence="2">
    <location>
        <begin position="557"/>
        <end position="578"/>
    </location>
</feature>
<feature type="domain" description="LRRNT">
    <location>
        <begin position="22"/>
        <end position="53"/>
    </location>
</feature>
<feature type="repeat" description="LRR 1">
    <location>
        <begin position="54"/>
        <end position="75"/>
    </location>
</feature>
<feature type="repeat" description="LRR 2">
    <location>
        <begin position="78"/>
        <end position="99"/>
    </location>
</feature>
<feature type="repeat" description="LRR 3">
    <location>
        <begin position="102"/>
        <end position="123"/>
    </location>
</feature>
<feature type="repeat" description="LRR 4">
    <location>
        <begin position="126"/>
        <end position="147"/>
    </location>
</feature>
<feature type="repeat" description="LRR 5">
    <location>
        <begin position="150"/>
        <end position="171"/>
    </location>
</feature>
<feature type="repeat" description="LRR 6">
    <location>
        <begin position="174"/>
        <end position="195"/>
    </location>
</feature>
<feature type="repeat" description="LRR 7">
    <location>
        <begin position="198"/>
        <end position="219"/>
    </location>
</feature>
<feature type="repeat" description="LRR 8">
    <location>
        <begin position="222"/>
        <end position="243"/>
    </location>
</feature>
<feature type="repeat" description="LRR 9">
    <location>
        <begin position="246"/>
        <end position="267"/>
    </location>
</feature>
<feature type="repeat" description="LRR 10">
    <location>
        <begin position="270"/>
        <end position="291"/>
    </location>
</feature>
<feature type="repeat" description="LRR 11">
    <location>
        <begin position="294"/>
        <end position="315"/>
    </location>
</feature>
<feature type="repeat" description="LRR 12">
    <location>
        <begin position="318"/>
        <end position="339"/>
    </location>
</feature>
<feature type="repeat" description="LRR 13">
    <location>
        <begin position="342"/>
        <end position="363"/>
    </location>
</feature>
<feature type="repeat" description="LRR 14">
    <location>
        <begin position="366"/>
        <end position="387"/>
    </location>
</feature>
<feature type="repeat" description="LRR 15">
    <location>
        <begin position="390"/>
        <end position="411"/>
    </location>
</feature>
<feature type="domain" description="LRRCT">
    <location>
        <begin position="423"/>
        <end position="473"/>
    </location>
</feature>
<feature type="region of interest" description="Disordered" evidence="3">
    <location>
        <begin position="476"/>
        <end position="500"/>
    </location>
</feature>
<feature type="glycosylation site" description="N-linked (GlcNAc...) asparagine" evidence="2">
    <location>
        <position position="75"/>
    </location>
</feature>
<feature type="glycosylation site" description="N-linked (GlcNAc...) asparagine" evidence="2">
    <location>
        <position position="369"/>
    </location>
</feature>
<sequence>MPLKHYLLLLVGCQAWALGLAYYGCPSECTCSRASQVECTGARIVAMPTPLPWNAMSLQVVNTHITELPENLFLNISALIALKMEKNELSTIMPGAFRNLGSLRYLSLANNKLRMLPIRVFQDVNNLESLLLSNNQLVQIQPAQFSQFSNLRELQLHGNNLESIPEEAFDHLVGLTKLNLGRNSFTHLSPRLFQHLGNLQVLRLHENRLSDIPMGTFDALGNLQELALQENQIGTLSPGLFHNNRNLQRLYLSNNHISQLPPGIFMQLPQLNKLTLFGNSLRELSPGVFGPMPNLRELWLYNNHITSLADNTFSHLNQLQVLILSHNQLTYISPGAFNGLTNLRELSLHTNALQDLDSNVFRSLANLQNISLQSNRLRQLPGSIFANVNGLTTIQLQNNNLENLPLGIFDHLVNLCELRLYDNPWRCDSDILPLHNWLLLNRARLGTDTLPVCSSPANVRGQSLVIININFPGPSVQGPETPEVPSYPDTPSYPDTTSVSSTTEITSAVDDYTDLTTIEATDDRNTWGMTEAQSGLAIAAIVIGIIALACSLAACICCCCCKKRSQAVLMQMKAPNEC</sequence>
<evidence type="ECO:0000250" key="1">
    <source>
        <dbReference type="UniProtKB" id="Q8TF66"/>
    </source>
</evidence>
<evidence type="ECO:0000255" key="2"/>
<evidence type="ECO:0000256" key="3">
    <source>
        <dbReference type="SAM" id="MobiDB-lite"/>
    </source>
</evidence>
<keyword id="KW-1003">Cell membrane</keyword>
<keyword id="KW-0325">Glycoprotein</keyword>
<keyword id="KW-0433">Leucine-rich repeat</keyword>
<keyword id="KW-0472">Membrane</keyword>
<keyword id="KW-1185">Reference proteome</keyword>
<keyword id="KW-0677">Repeat</keyword>
<keyword id="KW-0732">Signal</keyword>
<keyword id="KW-0812">Transmembrane</keyword>
<keyword id="KW-1133">Transmembrane helix</keyword>
<name>LRC15_RAT</name>
<gene>
    <name type="primary">Lrrc15</name>
    <name type="synonym">Lib</name>
</gene>
<protein>
    <recommendedName>
        <fullName>Leucine-rich repeat-containing protein 15</fullName>
    </recommendedName>
    <alternativeName>
        <fullName>Leucine-rich repeat protein induced by amyloid-beta</fullName>
        <shortName>rLib</shortName>
    </alternativeName>
</protein>
<comment type="subcellular location">
    <subcellularLocation>
        <location evidence="1">Cell membrane</location>
        <topology evidence="2">Single-pass type I membrane protein</topology>
    </subcellularLocation>
</comment>
<comment type="induction">
    <text>By amyloid-beta.</text>
</comment>
<reference key="1">
    <citation type="journal article" date="2002" name="Biochem. Biophys. Res. Commun.">
        <title>A novel member of the leucine-rich repeat superfamily induced in rat astrocytes by beta-amyloid.</title>
        <authorList>
            <person name="Satoh K."/>
            <person name="Hata M."/>
            <person name="Yokota H."/>
        </authorList>
    </citation>
    <scope>NUCLEOTIDE SEQUENCE [MRNA]</scope>
    <source>
        <strain>Wistar</strain>
        <tissue>Fetal brain</tissue>
    </source>
</reference>
<accession>Q8R5M3</accession>
<dbReference type="EMBL" id="AB071036">
    <property type="protein sequence ID" value="BAB84586.1"/>
    <property type="molecule type" value="mRNA"/>
</dbReference>
<dbReference type="RefSeq" id="NP_659551.1">
    <property type="nucleotide sequence ID" value="NM_145083.1"/>
</dbReference>
<dbReference type="SMR" id="Q8R5M3"/>
<dbReference type="FunCoup" id="Q8R5M3">
    <property type="interactions" value="60"/>
</dbReference>
<dbReference type="STRING" id="10116.ENSRNOP00000064155"/>
<dbReference type="GlyCosmos" id="Q8R5M3">
    <property type="glycosylation" value="2 sites, No reported glycans"/>
</dbReference>
<dbReference type="GlyGen" id="Q8R5M3">
    <property type="glycosylation" value="2 sites"/>
</dbReference>
<dbReference type="PhosphoSitePlus" id="Q8R5M3"/>
<dbReference type="PaxDb" id="10116-ENSRNOP00000064155"/>
<dbReference type="GeneID" id="246296"/>
<dbReference type="KEGG" id="rno:246296"/>
<dbReference type="UCSC" id="RGD:70551">
    <property type="organism name" value="rat"/>
</dbReference>
<dbReference type="AGR" id="RGD:2742"/>
<dbReference type="AGR" id="RGD:70551"/>
<dbReference type="CTD" id="131578"/>
<dbReference type="RGD" id="70551">
    <property type="gene designation" value="Lrrc15"/>
</dbReference>
<dbReference type="eggNOG" id="KOG0619">
    <property type="taxonomic scope" value="Eukaryota"/>
</dbReference>
<dbReference type="InParanoid" id="Q8R5M3"/>
<dbReference type="PhylomeDB" id="Q8R5M3"/>
<dbReference type="PRO" id="PR:Q8R5M3"/>
<dbReference type="Proteomes" id="UP000002494">
    <property type="component" value="Unplaced"/>
</dbReference>
<dbReference type="GO" id="GO:0016324">
    <property type="term" value="C:apical plasma membrane"/>
    <property type="evidence" value="ECO:0000266"/>
    <property type="project" value="RGD"/>
</dbReference>
<dbReference type="GO" id="GO:0009986">
    <property type="term" value="C:cell surface"/>
    <property type="evidence" value="ECO:0000314"/>
    <property type="project" value="RGD"/>
</dbReference>
<dbReference type="GO" id="GO:0005886">
    <property type="term" value="C:plasma membrane"/>
    <property type="evidence" value="ECO:0000250"/>
    <property type="project" value="UniProtKB"/>
</dbReference>
<dbReference type="GO" id="GO:0005518">
    <property type="term" value="F:collagen binding"/>
    <property type="evidence" value="ECO:0000266"/>
    <property type="project" value="RGD"/>
</dbReference>
<dbReference type="GO" id="GO:0001968">
    <property type="term" value="F:fibronectin binding"/>
    <property type="evidence" value="ECO:0000266"/>
    <property type="project" value="RGD"/>
</dbReference>
<dbReference type="GO" id="GO:0043236">
    <property type="term" value="F:laminin binding"/>
    <property type="evidence" value="ECO:0000266"/>
    <property type="project" value="RGD"/>
</dbReference>
<dbReference type="GO" id="GO:0140311">
    <property type="term" value="F:protein sequestering activity"/>
    <property type="evidence" value="ECO:0000266"/>
    <property type="project" value="RGD"/>
</dbReference>
<dbReference type="GO" id="GO:0046597">
    <property type="term" value="P:host-mediated suppression of symbiont invasion"/>
    <property type="evidence" value="ECO:0000266"/>
    <property type="project" value="RGD"/>
</dbReference>
<dbReference type="GO" id="GO:1903077">
    <property type="term" value="P:negative regulation of protein localization to plasma membrane"/>
    <property type="evidence" value="ECO:0000266"/>
    <property type="project" value="RGD"/>
</dbReference>
<dbReference type="GO" id="GO:0030335">
    <property type="term" value="P:positive regulation of cell migration"/>
    <property type="evidence" value="ECO:0000266"/>
    <property type="project" value="RGD"/>
</dbReference>
<dbReference type="GO" id="GO:0046813">
    <property type="term" value="P:receptor-mediated virion attachment to host cell"/>
    <property type="evidence" value="ECO:0000266"/>
    <property type="project" value="RGD"/>
</dbReference>
<dbReference type="FunFam" id="3.80.10.10:FF:000517">
    <property type="entry name" value="Leucine rich repeat containing 15"/>
    <property type="match status" value="1"/>
</dbReference>
<dbReference type="FunFam" id="3.80.10.10:FF:001162">
    <property type="entry name" value="Leucine rich repeat containing 15"/>
    <property type="match status" value="1"/>
</dbReference>
<dbReference type="FunFam" id="3.80.10.10:FF:000783">
    <property type="entry name" value="Leucine-rich repeat-containing protein 15"/>
    <property type="match status" value="1"/>
</dbReference>
<dbReference type="Gene3D" id="3.80.10.10">
    <property type="entry name" value="Ribonuclease Inhibitor"/>
    <property type="match status" value="4"/>
</dbReference>
<dbReference type="InterPro" id="IPR000483">
    <property type="entry name" value="Cys-rich_flank_reg_C"/>
</dbReference>
<dbReference type="InterPro" id="IPR001611">
    <property type="entry name" value="Leu-rich_rpt"/>
</dbReference>
<dbReference type="InterPro" id="IPR025875">
    <property type="entry name" value="Leu-rich_rpt_4"/>
</dbReference>
<dbReference type="InterPro" id="IPR003591">
    <property type="entry name" value="Leu-rich_rpt_typical-subtyp"/>
</dbReference>
<dbReference type="InterPro" id="IPR032675">
    <property type="entry name" value="LRR_dom_sf"/>
</dbReference>
<dbReference type="PANTHER" id="PTHR24366">
    <property type="entry name" value="IG(IMMUNOGLOBULIN) AND LRR(LEUCINE RICH REPEAT) DOMAINS"/>
    <property type="match status" value="1"/>
</dbReference>
<dbReference type="PANTHER" id="PTHR24366:SF161">
    <property type="entry name" value="TIR DOMAIN-CONTAINING PROTEIN"/>
    <property type="match status" value="1"/>
</dbReference>
<dbReference type="Pfam" id="PF00560">
    <property type="entry name" value="LRR_1"/>
    <property type="match status" value="1"/>
</dbReference>
<dbReference type="Pfam" id="PF12799">
    <property type="entry name" value="LRR_4"/>
    <property type="match status" value="1"/>
</dbReference>
<dbReference type="Pfam" id="PF13855">
    <property type="entry name" value="LRR_8"/>
    <property type="match status" value="4"/>
</dbReference>
<dbReference type="SMART" id="SM00365">
    <property type="entry name" value="LRR_SD22"/>
    <property type="match status" value="5"/>
</dbReference>
<dbReference type="SMART" id="SM00369">
    <property type="entry name" value="LRR_TYP"/>
    <property type="match status" value="14"/>
</dbReference>
<dbReference type="SMART" id="SM00082">
    <property type="entry name" value="LRRCT"/>
    <property type="match status" value="1"/>
</dbReference>
<dbReference type="SUPFAM" id="SSF52058">
    <property type="entry name" value="L domain-like"/>
    <property type="match status" value="2"/>
</dbReference>
<dbReference type="PROSITE" id="PS51450">
    <property type="entry name" value="LRR"/>
    <property type="match status" value="14"/>
</dbReference>
<organism>
    <name type="scientific">Rattus norvegicus</name>
    <name type="common">Rat</name>
    <dbReference type="NCBI Taxonomy" id="10116"/>
    <lineage>
        <taxon>Eukaryota</taxon>
        <taxon>Metazoa</taxon>
        <taxon>Chordata</taxon>
        <taxon>Craniata</taxon>
        <taxon>Vertebrata</taxon>
        <taxon>Euteleostomi</taxon>
        <taxon>Mammalia</taxon>
        <taxon>Eutheria</taxon>
        <taxon>Euarchontoglires</taxon>
        <taxon>Glires</taxon>
        <taxon>Rodentia</taxon>
        <taxon>Myomorpha</taxon>
        <taxon>Muroidea</taxon>
        <taxon>Muridae</taxon>
        <taxon>Murinae</taxon>
        <taxon>Rattus</taxon>
    </lineage>
</organism>